<protein>
    <recommendedName>
        <fullName evidence="1">Adapter protein MecA</fullName>
    </recommendedName>
</protein>
<dbReference type="EMBL" id="CP000422">
    <property type="protein sequence ID" value="ABJ68260.1"/>
    <property type="molecule type" value="Genomic_DNA"/>
</dbReference>
<dbReference type="RefSeq" id="WP_011673554.1">
    <property type="nucleotide sequence ID" value="NC_008525.1"/>
</dbReference>
<dbReference type="SMR" id="Q03EW2"/>
<dbReference type="STRING" id="278197.PEPE_1206"/>
<dbReference type="GeneID" id="33062047"/>
<dbReference type="KEGG" id="ppe:PEPE_1206"/>
<dbReference type="eggNOG" id="COG4862">
    <property type="taxonomic scope" value="Bacteria"/>
</dbReference>
<dbReference type="HOGENOM" id="CLU_071496_2_0_9"/>
<dbReference type="OrthoDB" id="2360201at2"/>
<dbReference type="Proteomes" id="UP000000773">
    <property type="component" value="Chromosome"/>
</dbReference>
<dbReference type="GO" id="GO:0030674">
    <property type="term" value="F:protein-macromolecule adaptor activity"/>
    <property type="evidence" value="ECO:0007669"/>
    <property type="project" value="UniProtKB-UniRule"/>
</dbReference>
<dbReference type="Gene3D" id="3.30.70.1950">
    <property type="match status" value="1"/>
</dbReference>
<dbReference type="HAMAP" id="MF_01124">
    <property type="entry name" value="MecA"/>
    <property type="match status" value="1"/>
</dbReference>
<dbReference type="InterPro" id="IPR038471">
    <property type="entry name" value="MecA_C_sf"/>
</dbReference>
<dbReference type="InterPro" id="IPR008681">
    <property type="entry name" value="Neg-reg_MecA"/>
</dbReference>
<dbReference type="PANTHER" id="PTHR39161">
    <property type="entry name" value="ADAPTER PROTEIN MECA"/>
    <property type="match status" value="1"/>
</dbReference>
<dbReference type="PANTHER" id="PTHR39161:SF1">
    <property type="entry name" value="ADAPTER PROTEIN MECA 1"/>
    <property type="match status" value="1"/>
</dbReference>
<dbReference type="Pfam" id="PF05389">
    <property type="entry name" value="MecA"/>
    <property type="match status" value="1"/>
</dbReference>
<dbReference type="PIRSF" id="PIRSF029008">
    <property type="entry name" value="MecA"/>
    <property type="match status" value="1"/>
</dbReference>
<organism>
    <name type="scientific">Pediococcus pentosaceus (strain ATCC 25745 / CCUG 21536 / LMG 10740 / 183-1w)</name>
    <dbReference type="NCBI Taxonomy" id="278197"/>
    <lineage>
        <taxon>Bacteria</taxon>
        <taxon>Bacillati</taxon>
        <taxon>Bacillota</taxon>
        <taxon>Bacilli</taxon>
        <taxon>Lactobacillales</taxon>
        <taxon>Lactobacillaceae</taxon>
        <taxon>Pediococcus</taxon>
    </lineage>
</organism>
<comment type="function">
    <text evidence="1">Enables the recognition and targeting of unfolded and aggregated proteins to the ClpC protease or to other proteins involved in proteolysis.</text>
</comment>
<comment type="subunit">
    <text evidence="1">Homodimer.</text>
</comment>
<comment type="domain">
    <text>The N-terminal domain probably binds unfolded/aggregated proteins; the C-terminal domain interacts with ClpC.</text>
</comment>
<comment type="similarity">
    <text evidence="1">Belongs to the MecA family.</text>
</comment>
<reference key="1">
    <citation type="journal article" date="2006" name="Proc. Natl. Acad. Sci. U.S.A.">
        <title>Comparative genomics of the lactic acid bacteria.</title>
        <authorList>
            <person name="Makarova K.S."/>
            <person name="Slesarev A."/>
            <person name="Wolf Y.I."/>
            <person name="Sorokin A."/>
            <person name="Mirkin B."/>
            <person name="Koonin E.V."/>
            <person name="Pavlov A."/>
            <person name="Pavlova N."/>
            <person name="Karamychev V."/>
            <person name="Polouchine N."/>
            <person name="Shakhova V."/>
            <person name="Grigoriev I."/>
            <person name="Lou Y."/>
            <person name="Rohksar D."/>
            <person name="Lucas S."/>
            <person name="Huang K."/>
            <person name="Goodstein D.M."/>
            <person name="Hawkins T."/>
            <person name="Plengvidhya V."/>
            <person name="Welker D."/>
            <person name="Hughes J."/>
            <person name="Goh Y."/>
            <person name="Benson A."/>
            <person name="Baldwin K."/>
            <person name="Lee J.-H."/>
            <person name="Diaz-Muniz I."/>
            <person name="Dosti B."/>
            <person name="Smeianov V."/>
            <person name="Wechter W."/>
            <person name="Barabote R."/>
            <person name="Lorca G."/>
            <person name="Altermann E."/>
            <person name="Barrangou R."/>
            <person name="Ganesan B."/>
            <person name="Xie Y."/>
            <person name="Rawsthorne H."/>
            <person name="Tamir D."/>
            <person name="Parker C."/>
            <person name="Breidt F."/>
            <person name="Broadbent J.R."/>
            <person name="Hutkins R."/>
            <person name="O'Sullivan D."/>
            <person name="Steele J."/>
            <person name="Unlu G."/>
            <person name="Saier M.H. Jr."/>
            <person name="Klaenhammer T."/>
            <person name="Richardson P."/>
            <person name="Kozyavkin S."/>
            <person name="Weimer B.C."/>
            <person name="Mills D.A."/>
        </authorList>
    </citation>
    <scope>NUCLEOTIDE SEQUENCE [LARGE SCALE GENOMIC DNA]</scope>
    <source>
        <strain>ATCC 25745 / CCUG 21536 / LMG 10740 / 183-1w</strain>
    </source>
</reference>
<proteinExistence type="inferred from homology"/>
<feature type="chain" id="PRO_1000065344" description="Adapter protein MecA">
    <location>
        <begin position="1"/>
        <end position="241"/>
    </location>
</feature>
<feature type="region of interest" description="Disordered" evidence="2">
    <location>
        <begin position="115"/>
        <end position="141"/>
    </location>
</feature>
<gene>
    <name evidence="1" type="primary">mecA</name>
    <name type="ordered locus">PEPE_1206</name>
</gene>
<sequence>MEMERINDDTIRVTISSDDLNERGVTFLDLLDNHKEIESFFYSVLEEVDTDHQFASNDAVTFQVLPNRNGLELYISKNPTDGMEEAIKSVSKDNAPSNGEMDEVSDFLKRKLAETDSNDKNNDDSSYMSDGNPADLNGYANGVGSTQKSVIELEDFESLPSIAELIKTNSGIESVLYRYHDIYYLELTFFTSENSPETIKNDLAIAYEYGNSTIVSSEVLREHGEVVMDGAALELAKRYFK</sequence>
<accession>Q03EW2</accession>
<name>MECA_PEDPA</name>
<evidence type="ECO:0000255" key="1">
    <source>
        <dbReference type="HAMAP-Rule" id="MF_01124"/>
    </source>
</evidence>
<evidence type="ECO:0000256" key="2">
    <source>
        <dbReference type="SAM" id="MobiDB-lite"/>
    </source>
</evidence>